<feature type="chain" id="PRO_0000262781" description="4-hydroxybenzoate octaprenyltransferase">
    <location>
        <begin position="1"/>
        <end position="287"/>
    </location>
</feature>
<feature type="transmembrane region" description="Helical" evidence="1">
    <location>
        <begin position="41"/>
        <end position="61"/>
    </location>
</feature>
<feature type="transmembrane region" description="Helical" evidence="1">
    <location>
        <begin position="89"/>
        <end position="109"/>
    </location>
</feature>
<feature type="transmembrane region" description="Helical" evidence="1">
    <location>
        <begin position="133"/>
        <end position="153"/>
    </location>
</feature>
<feature type="transmembrane region" description="Helical" evidence="1">
    <location>
        <begin position="158"/>
        <end position="178"/>
    </location>
</feature>
<feature type="transmembrane region" description="Helical" evidence="1">
    <location>
        <begin position="202"/>
        <end position="224"/>
    </location>
</feature>
<feature type="transmembrane region" description="Helical" evidence="1">
    <location>
        <begin position="266"/>
        <end position="286"/>
    </location>
</feature>
<comment type="function">
    <text evidence="1">Catalyzes the prenylation of para-hydroxybenzoate (PHB) with an all-trans polyprenyl group. Mediates the second step in the final reaction sequence of ubiquinone-8 (UQ-8) biosynthesis, which is the condensation of the polyisoprenoid side chain with PHB, generating the first membrane-bound Q intermediate 3-octaprenyl-4-hydroxybenzoate.</text>
</comment>
<comment type="catalytic activity">
    <reaction evidence="1">
        <text>all-trans-octaprenyl diphosphate + 4-hydroxybenzoate = 4-hydroxy-3-(all-trans-octaprenyl)benzoate + diphosphate</text>
        <dbReference type="Rhea" id="RHEA:27782"/>
        <dbReference type="ChEBI" id="CHEBI:1617"/>
        <dbReference type="ChEBI" id="CHEBI:17879"/>
        <dbReference type="ChEBI" id="CHEBI:33019"/>
        <dbReference type="ChEBI" id="CHEBI:57711"/>
        <dbReference type="EC" id="2.5.1.39"/>
    </reaction>
</comment>
<comment type="cofactor">
    <cofactor evidence="1">
        <name>Mg(2+)</name>
        <dbReference type="ChEBI" id="CHEBI:18420"/>
    </cofactor>
</comment>
<comment type="pathway">
    <text evidence="1">Cofactor biosynthesis; ubiquinone biosynthesis.</text>
</comment>
<comment type="subcellular location">
    <subcellularLocation>
        <location evidence="1">Cell inner membrane</location>
        <topology evidence="1">Multi-pass membrane protein</topology>
    </subcellularLocation>
</comment>
<comment type="similarity">
    <text evidence="1">Belongs to the UbiA prenyltransferase family.</text>
</comment>
<reference key="1">
    <citation type="submission" date="2006-05" db="EMBL/GenBank/DDBJ databases">
        <title>Complete sequence of chromosome 1 of Burkholderia cenocepacia AU 1054.</title>
        <authorList>
            <consortium name="US DOE Joint Genome Institute"/>
            <person name="Copeland A."/>
            <person name="Lucas S."/>
            <person name="Lapidus A."/>
            <person name="Barry K."/>
            <person name="Detter J.C."/>
            <person name="Glavina del Rio T."/>
            <person name="Hammon N."/>
            <person name="Israni S."/>
            <person name="Dalin E."/>
            <person name="Tice H."/>
            <person name="Pitluck S."/>
            <person name="Chain P."/>
            <person name="Malfatti S."/>
            <person name="Shin M."/>
            <person name="Vergez L."/>
            <person name="Schmutz J."/>
            <person name="Larimer F."/>
            <person name="Land M."/>
            <person name="Hauser L."/>
            <person name="Kyrpides N."/>
            <person name="Lykidis A."/>
            <person name="LiPuma J.J."/>
            <person name="Konstantinidis K."/>
            <person name="Tiedje J.M."/>
            <person name="Richardson P."/>
        </authorList>
    </citation>
    <scope>NUCLEOTIDE SEQUENCE [LARGE SCALE GENOMIC DNA]</scope>
    <source>
        <strain>AU 1054</strain>
    </source>
</reference>
<organism>
    <name type="scientific">Burkholderia orbicola (strain AU 1054)</name>
    <dbReference type="NCBI Taxonomy" id="331271"/>
    <lineage>
        <taxon>Bacteria</taxon>
        <taxon>Pseudomonadati</taxon>
        <taxon>Pseudomonadota</taxon>
        <taxon>Betaproteobacteria</taxon>
        <taxon>Burkholderiales</taxon>
        <taxon>Burkholderiaceae</taxon>
        <taxon>Burkholderia</taxon>
        <taxon>Burkholderia cepacia complex</taxon>
        <taxon>Burkholderia orbicola</taxon>
    </lineage>
</organism>
<gene>
    <name evidence="1" type="primary">ubiA</name>
    <name type="ordered locus">Bcen_0245</name>
</gene>
<protein>
    <recommendedName>
        <fullName evidence="1">4-hydroxybenzoate octaprenyltransferase</fullName>
        <ecNumber evidence="1">2.5.1.39</ecNumber>
    </recommendedName>
    <alternativeName>
        <fullName evidence="1">4-HB polyprenyltransferase</fullName>
    </alternativeName>
</protein>
<dbReference type="EC" id="2.5.1.39" evidence="1"/>
<dbReference type="EMBL" id="CP000378">
    <property type="protein sequence ID" value="ABF75159.1"/>
    <property type="molecule type" value="Genomic_DNA"/>
</dbReference>
<dbReference type="SMR" id="Q1BYZ6"/>
<dbReference type="HOGENOM" id="CLU_034879_1_0_4"/>
<dbReference type="UniPathway" id="UPA00232"/>
<dbReference type="GO" id="GO:0005886">
    <property type="term" value="C:plasma membrane"/>
    <property type="evidence" value="ECO:0007669"/>
    <property type="project" value="UniProtKB-SubCell"/>
</dbReference>
<dbReference type="GO" id="GO:0008412">
    <property type="term" value="F:4-hydroxybenzoate polyprenyltransferase activity"/>
    <property type="evidence" value="ECO:0007669"/>
    <property type="project" value="UniProtKB-UniRule"/>
</dbReference>
<dbReference type="GO" id="GO:0006744">
    <property type="term" value="P:ubiquinone biosynthetic process"/>
    <property type="evidence" value="ECO:0007669"/>
    <property type="project" value="UniProtKB-UniRule"/>
</dbReference>
<dbReference type="CDD" id="cd13959">
    <property type="entry name" value="PT_UbiA_COQ2"/>
    <property type="match status" value="1"/>
</dbReference>
<dbReference type="FunFam" id="1.10.357.140:FF:000002">
    <property type="entry name" value="4-hydroxybenzoate octaprenyltransferase"/>
    <property type="match status" value="1"/>
</dbReference>
<dbReference type="FunFam" id="1.20.120.1780:FF:000001">
    <property type="entry name" value="4-hydroxybenzoate octaprenyltransferase"/>
    <property type="match status" value="1"/>
</dbReference>
<dbReference type="Gene3D" id="1.10.357.140">
    <property type="entry name" value="UbiA prenyltransferase"/>
    <property type="match status" value="1"/>
</dbReference>
<dbReference type="Gene3D" id="1.20.120.1780">
    <property type="entry name" value="UbiA prenyltransferase"/>
    <property type="match status" value="1"/>
</dbReference>
<dbReference type="HAMAP" id="MF_01635">
    <property type="entry name" value="UbiA"/>
    <property type="match status" value="1"/>
</dbReference>
<dbReference type="InterPro" id="IPR006370">
    <property type="entry name" value="HB_polyprenyltransferase-like"/>
</dbReference>
<dbReference type="InterPro" id="IPR039653">
    <property type="entry name" value="Prenyltransferase"/>
</dbReference>
<dbReference type="InterPro" id="IPR000537">
    <property type="entry name" value="UbiA_prenyltransferase"/>
</dbReference>
<dbReference type="InterPro" id="IPR030470">
    <property type="entry name" value="UbiA_prenylTrfase_CS"/>
</dbReference>
<dbReference type="InterPro" id="IPR044878">
    <property type="entry name" value="UbiA_sf"/>
</dbReference>
<dbReference type="NCBIfam" id="TIGR01474">
    <property type="entry name" value="ubiA_proteo"/>
    <property type="match status" value="1"/>
</dbReference>
<dbReference type="PANTHER" id="PTHR11048:SF28">
    <property type="entry name" value="4-HYDROXYBENZOATE POLYPRENYLTRANSFERASE, MITOCHONDRIAL"/>
    <property type="match status" value="1"/>
</dbReference>
<dbReference type="PANTHER" id="PTHR11048">
    <property type="entry name" value="PRENYLTRANSFERASES"/>
    <property type="match status" value="1"/>
</dbReference>
<dbReference type="Pfam" id="PF01040">
    <property type="entry name" value="UbiA"/>
    <property type="match status" value="1"/>
</dbReference>
<dbReference type="PROSITE" id="PS00943">
    <property type="entry name" value="UBIA"/>
    <property type="match status" value="1"/>
</dbReference>
<name>UBIA_BURO1</name>
<evidence type="ECO:0000255" key="1">
    <source>
        <dbReference type="HAMAP-Rule" id="MF_01635"/>
    </source>
</evidence>
<proteinExistence type="inferred from homology"/>
<sequence>MLARFPLYLRLVRMDKPIGSLLLLWPTLNALWIASDGRPRWPLLVIFTLGTLLMRSAGCAMNDYADRDFDRHVKRTADRPLTSGKIRAWEAVAIAVGLSFIAFLLILPLNTLTKELSVVALFVAGSYPFMKRFFAIPQAYLGIAFGFGIPMAFAAVQDTVPMLAWVMLVANIFWSVAYDTEYAMVDRDDDIKIGIRTSALTFGRFDVAAVMACYAATLGIYVWIGVTLGFGLAYWVGWAAAVGCALYHYTLIKDRERMPCFAAFRHNNWLGGVLFAGIAAHYLLAGN</sequence>
<accession>Q1BYZ6</accession>
<keyword id="KW-0997">Cell inner membrane</keyword>
<keyword id="KW-1003">Cell membrane</keyword>
<keyword id="KW-0460">Magnesium</keyword>
<keyword id="KW-0472">Membrane</keyword>
<keyword id="KW-0808">Transferase</keyword>
<keyword id="KW-0812">Transmembrane</keyword>
<keyword id="KW-1133">Transmembrane helix</keyword>
<keyword id="KW-0831">Ubiquinone biosynthesis</keyword>